<comment type="function">
    <text evidence="6 8">Type 1 keratin (Probable). Maintains postnatal tongue mucosal cell homeostasis and tissue organization in response to mechanical stress, potentially via regulation of the G1/S phase cyclins CCNE1 and CCNE2 (PubMed:32758484).</text>
</comment>
<comment type="subunit">
    <text evidence="8">Heterotetramer of two type I and two type II keratins.</text>
</comment>
<comment type="alternative products">
    <event type="alternative splicing"/>
    <isoform>
        <id>P08730-1</id>
        <name>1</name>
        <sequence type="displayed"/>
    </isoform>
    <isoform>
        <id>P08730-2</id>
        <name>2</name>
        <sequence type="described" ref="VSP_016378"/>
    </isoform>
</comment>
<comment type="tissue specificity">
    <text evidence="4 5">Expressed in tongue epithelia (at protein level) (PubMed:1695590). Expressed in upper suprabasal layers of the corneal epithelium (at protein level) (PubMed:26758872).</text>
</comment>
<comment type="developmental stage">
    <text evidence="6">Expressed in the oral mucosa, including the palate, dorsal tongue, ventral tongue, and the floor of the mouth at 17.5 dpc (PubMed:32758484). Expressed in basal cells and differentiated keratinocytes at the ventral surface and the oral interpapillary cell column on the dorsal surface of the tongue at birth (PubMed:32758484). Ubiquitously expressed in basal cells and differentiated keratinocytes on the ventral tongue epithelium, however expression was limited to the cells in the interpapillary region and keratinized layer on the dorsal tongue at postnatal day 20 (P20) (PubMed:32758484). Also expressed in the buccal mucosa and esophagus at P20 (PubMed:32758484).</text>
</comment>
<comment type="PTM">
    <text evidence="1">O-glycosylated; glycans consist of single N-acetylglucosamine residues.</text>
</comment>
<comment type="disruption phenotype">
    <text evidence="6">Knockout mice maintain a normal body weight and developmental phenotype (PubMed:32758484). Tongue histological abnormalities are evident at P20 including the loss of two lingual vessel branches at the ventral side of the tongue which appears white and wrinkled, especially on the ventral surface at three weeks of age (PubMed:32758484). Loss of column-like basal cell organization and increase in nuclear atypia and vacuolization in both the basal and suprabasal layers of the tongue (PubMed:32758484). Loss of keratohyalin granules, abnormal presence of cuboidal cells in the suprabasal layers and loss of organization of the outermost keratin layer leading to a foamy appearance (PubMed:32758484). Increase in intracellular gaps, however desmosomes still formed but were found broken and intermediate filaments running from the desmosomes to the cytoplasm were missing or reduced (PubMed:32758484). Cytoplasmic vacuolization is evident in all cell layers and large lipid droplets are found in granular cells in the tongue epithelia (PubMed:32758484). Severe abnormalities in buccal mucosa and esophagus including thickened epithelium, immature suprabasal cells, loss of keratohyalin granules and a disorganized keratin layer at P20 (PubMed:32758484). Disrupted proliferation and differentiation in tongue epithelial cells at P20, as indicated by disordered expression of the transcription factor Tp63/P63, the basal progenitor cell marker Krt5, and the differentiated epithelial cell marker Loricrin (PubMed:32758484). Increase in proliferating cells in the upper layers of the tongue epithelium at P20 (PubMed:32758484). Normal tongue morphology, structural architecture and epithelial cell proliferation at birth (PubMed:32758484). Differential expression of 125 genes in the tongue at P0, enriched in keratinization, proinflammatory responses, stress-activated protein kinase signaling and threonine/lipid metabolic processes (PubMed:32758484). Differential expression of 2907 genes in the ventral tongue at P20 involved in a range of processes, however primarily in cell cycle regulatory pathways (PubMed:32758484). Increase in the expression of CCNE1 and CCNE2 in response to in vitro mechanical stress of the tongue (PubMed:32758484).</text>
</comment>
<comment type="miscellaneous">
    <text>There are two types of cytoskeletal and microfibrillar keratin: I (acidic; 40-55 kDa) and II (neutral to basic; 56-70 kDa).</text>
</comment>
<comment type="similarity">
    <text evidence="2">Belongs to the intermediate filament family.</text>
</comment>
<proteinExistence type="evidence at protein level"/>
<protein>
    <recommendedName>
        <fullName>Keratin, type I cytoskeletal 13</fullName>
    </recommendedName>
    <alternativeName>
        <fullName>47 kDa cytokeratin</fullName>
    </alternativeName>
    <alternativeName>
        <fullName>Cytokeratin-13</fullName>
        <shortName>CK-13</shortName>
    </alternativeName>
    <alternativeName>
        <fullName>Keratin-13</fullName>
        <shortName>K13</shortName>
    </alternativeName>
</protein>
<feature type="chain" id="PRO_0000063648" description="Keratin, type I cytoskeletal 13">
    <location>
        <begin position="1"/>
        <end position="437"/>
    </location>
</feature>
<feature type="domain" description="IF rod" evidence="2">
    <location>
        <begin position="96"/>
        <end position="408"/>
    </location>
</feature>
<feature type="region of interest" description="Head">
    <location>
        <begin position="1"/>
        <end position="95"/>
    </location>
</feature>
<feature type="region of interest" description="Coil 1A">
    <location>
        <begin position="96"/>
        <end position="131"/>
    </location>
</feature>
<feature type="region of interest" description="Linker 1">
    <location>
        <begin position="132"/>
        <end position="150"/>
    </location>
</feature>
<feature type="region of interest" description="Coil 1B">
    <location>
        <begin position="151"/>
        <end position="242"/>
    </location>
</feature>
<feature type="region of interest" description="Linker 12">
    <location>
        <begin position="243"/>
        <end position="265"/>
    </location>
</feature>
<feature type="region of interest" description="Coil 2">
    <location>
        <begin position="266"/>
        <end position="404"/>
    </location>
</feature>
<feature type="region of interest" description="Tail">
    <location>
        <begin position="405"/>
        <end position="437"/>
    </location>
</feature>
<feature type="region of interest" description="Disordered" evidence="3">
    <location>
        <begin position="408"/>
        <end position="437"/>
    </location>
</feature>
<feature type="compositionally biased region" description="Low complexity" evidence="3">
    <location>
        <begin position="409"/>
        <end position="430"/>
    </location>
</feature>
<feature type="modified residue" description="Omega-N-methylarginine" evidence="1">
    <location>
        <position position="27"/>
    </location>
</feature>
<feature type="modified residue" description="Omega-N-methylarginine" evidence="1">
    <location>
        <position position="35"/>
    </location>
</feature>
<feature type="splice variant" id="VSP_016378" description="In isoform 2." evidence="7">
    <location>
        <begin position="300"/>
        <end position="425"/>
    </location>
</feature>
<dbReference type="EMBL" id="U13921">
    <property type="protein sequence ID" value="AAC52150.1"/>
    <property type="molecule type" value="Genomic_DNA"/>
</dbReference>
<dbReference type="EMBL" id="AK132640">
    <property type="protein sequence ID" value="BAE21276.1"/>
    <property type="molecule type" value="mRNA"/>
</dbReference>
<dbReference type="EMBL" id="BC060286">
    <property type="protein sequence ID" value="AAH60286.1"/>
    <property type="molecule type" value="mRNA"/>
</dbReference>
<dbReference type="EMBL" id="X53320">
    <property type="protein sequence ID" value="CAA37407.1"/>
    <property type="molecule type" value="Genomic_DNA"/>
</dbReference>
<dbReference type="EMBL" id="X03492">
    <property type="protein sequence ID" value="CAA27208.1"/>
    <property type="molecule type" value="mRNA"/>
</dbReference>
<dbReference type="CCDS" id="CCDS25409.1">
    <molecule id="P08730-1"/>
</dbReference>
<dbReference type="PIR" id="A55682">
    <property type="entry name" value="A55682"/>
</dbReference>
<dbReference type="RefSeq" id="NP_001300878.1">
    <property type="nucleotide sequence ID" value="NM_001313949.1"/>
</dbReference>
<dbReference type="RefSeq" id="NP_034792.1">
    <molecule id="P08730-1"/>
    <property type="nucleotide sequence ID" value="NM_010662.2"/>
</dbReference>
<dbReference type="SMR" id="P08730"/>
<dbReference type="BioGRID" id="201018">
    <property type="interactions" value="12"/>
</dbReference>
<dbReference type="FunCoup" id="P08730">
    <property type="interactions" value="160"/>
</dbReference>
<dbReference type="IntAct" id="P08730">
    <property type="interactions" value="2"/>
</dbReference>
<dbReference type="MINT" id="P08730"/>
<dbReference type="STRING" id="10090.ENSMUSP00000007275"/>
<dbReference type="GlyGen" id="P08730">
    <property type="glycosylation" value="1 site, 1 O-linked glycan (1 site)"/>
</dbReference>
<dbReference type="iPTMnet" id="P08730"/>
<dbReference type="PhosphoSitePlus" id="P08730"/>
<dbReference type="SwissPalm" id="P08730"/>
<dbReference type="jPOST" id="P08730"/>
<dbReference type="PaxDb" id="10090-ENSMUSP00000007275"/>
<dbReference type="PeptideAtlas" id="P08730"/>
<dbReference type="ProteomicsDB" id="269048">
    <molecule id="P08730-1"/>
</dbReference>
<dbReference type="ProteomicsDB" id="269049">
    <molecule id="P08730-2"/>
</dbReference>
<dbReference type="DNASU" id="16663"/>
<dbReference type="Ensembl" id="ENSMUST00000007275.3">
    <molecule id="P08730-1"/>
    <property type="protein sequence ID" value="ENSMUSP00000007275.3"/>
    <property type="gene ID" value="ENSMUSG00000044041.5"/>
</dbReference>
<dbReference type="GeneID" id="16663"/>
<dbReference type="KEGG" id="mmu:16663"/>
<dbReference type="UCSC" id="uc007lkj.1">
    <molecule id="P08730-1"/>
    <property type="organism name" value="mouse"/>
</dbReference>
<dbReference type="AGR" id="MGI:101925"/>
<dbReference type="CTD" id="3860"/>
<dbReference type="MGI" id="MGI:101925">
    <property type="gene designation" value="Krt13"/>
</dbReference>
<dbReference type="VEuPathDB" id="HostDB:ENSMUSG00000044041"/>
<dbReference type="eggNOG" id="ENOG502QTM6">
    <property type="taxonomic scope" value="Eukaryota"/>
</dbReference>
<dbReference type="GeneTree" id="ENSGT00940000154403"/>
<dbReference type="HOGENOM" id="CLU_012560_8_3_1"/>
<dbReference type="InParanoid" id="P08730"/>
<dbReference type="OMA" id="DAKMTGF"/>
<dbReference type="OrthoDB" id="2441647at2759"/>
<dbReference type="PhylomeDB" id="P08730"/>
<dbReference type="TreeFam" id="TF332742"/>
<dbReference type="Reactome" id="R-MMU-6805567">
    <property type="pathway name" value="Keratinization"/>
</dbReference>
<dbReference type="Reactome" id="R-MMU-6809371">
    <property type="pathway name" value="Formation of the cornified envelope"/>
</dbReference>
<dbReference type="BioGRID-ORCS" id="16663">
    <property type="hits" value="2 hits in 78 CRISPR screens"/>
</dbReference>
<dbReference type="ChiTaRS" id="Krt13">
    <property type="organism name" value="mouse"/>
</dbReference>
<dbReference type="PRO" id="PR:P08730"/>
<dbReference type="Proteomes" id="UP000000589">
    <property type="component" value="Chromosome 11"/>
</dbReference>
<dbReference type="RNAct" id="P08730">
    <property type="molecule type" value="protein"/>
</dbReference>
<dbReference type="Bgee" id="ENSMUSG00000044041">
    <property type="expression patterns" value="Expressed in superior surface of tongue and 104 other cell types or tissues"/>
</dbReference>
<dbReference type="GO" id="GO:0005882">
    <property type="term" value="C:intermediate filament"/>
    <property type="evidence" value="ECO:0007669"/>
    <property type="project" value="UniProtKB-KW"/>
</dbReference>
<dbReference type="GO" id="GO:0005198">
    <property type="term" value="F:structural molecule activity"/>
    <property type="evidence" value="ECO:0007669"/>
    <property type="project" value="InterPro"/>
</dbReference>
<dbReference type="GO" id="GO:0071300">
    <property type="term" value="P:cellular response to retinoic acid"/>
    <property type="evidence" value="ECO:0007669"/>
    <property type="project" value="Ensembl"/>
</dbReference>
<dbReference type="GO" id="GO:0043555">
    <property type="term" value="P:regulation of translation in response to stress"/>
    <property type="evidence" value="ECO:0000315"/>
    <property type="project" value="UniProtKB"/>
</dbReference>
<dbReference type="GO" id="GO:0043587">
    <property type="term" value="P:tongue morphogenesis"/>
    <property type="evidence" value="ECO:0007669"/>
    <property type="project" value="Ensembl"/>
</dbReference>
<dbReference type="FunFam" id="1.20.5.1160:FF:000002">
    <property type="entry name" value="Type I keratin 10"/>
    <property type="match status" value="1"/>
</dbReference>
<dbReference type="FunFam" id="1.20.5.170:FF:000002">
    <property type="entry name" value="Type I keratin KA11"/>
    <property type="match status" value="1"/>
</dbReference>
<dbReference type="FunFam" id="1.20.5.500:FF:000001">
    <property type="entry name" value="Type II keratin 23"/>
    <property type="match status" value="1"/>
</dbReference>
<dbReference type="Gene3D" id="1.20.5.170">
    <property type="match status" value="1"/>
</dbReference>
<dbReference type="Gene3D" id="1.20.5.500">
    <property type="entry name" value="Single helix bin"/>
    <property type="match status" value="1"/>
</dbReference>
<dbReference type="Gene3D" id="1.20.5.1160">
    <property type="entry name" value="Vasodilator-stimulated phosphoprotein"/>
    <property type="match status" value="1"/>
</dbReference>
<dbReference type="InterPro" id="IPR018039">
    <property type="entry name" value="IF_conserved"/>
</dbReference>
<dbReference type="InterPro" id="IPR039008">
    <property type="entry name" value="IF_rod_dom"/>
</dbReference>
<dbReference type="InterPro" id="IPR002957">
    <property type="entry name" value="Keratin_I"/>
</dbReference>
<dbReference type="PANTHER" id="PTHR23239">
    <property type="entry name" value="INTERMEDIATE FILAMENT"/>
    <property type="match status" value="1"/>
</dbReference>
<dbReference type="PANTHER" id="PTHR23239:SF121">
    <property type="entry name" value="KERATIN, TYPE I CYTOSKELETAL 13"/>
    <property type="match status" value="1"/>
</dbReference>
<dbReference type="Pfam" id="PF00038">
    <property type="entry name" value="Filament"/>
    <property type="match status" value="1"/>
</dbReference>
<dbReference type="PRINTS" id="PR01248">
    <property type="entry name" value="TYPE1KERATIN"/>
</dbReference>
<dbReference type="SMART" id="SM01391">
    <property type="entry name" value="Filament"/>
    <property type="match status" value="1"/>
</dbReference>
<dbReference type="SUPFAM" id="SSF64593">
    <property type="entry name" value="Intermediate filament protein, coiled coil region"/>
    <property type="match status" value="2"/>
</dbReference>
<dbReference type="PROSITE" id="PS00226">
    <property type="entry name" value="IF_ROD_1"/>
    <property type="match status" value="1"/>
</dbReference>
<dbReference type="PROSITE" id="PS51842">
    <property type="entry name" value="IF_ROD_2"/>
    <property type="match status" value="1"/>
</dbReference>
<evidence type="ECO:0000250" key="1">
    <source>
        <dbReference type="UniProtKB" id="P13646"/>
    </source>
</evidence>
<evidence type="ECO:0000255" key="2">
    <source>
        <dbReference type="PROSITE-ProRule" id="PRU01188"/>
    </source>
</evidence>
<evidence type="ECO:0000256" key="3">
    <source>
        <dbReference type="SAM" id="MobiDB-lite"/>
    </source>
</evidence>
<evidence type="ECO:0000269" key="4">
    <source>
    </source>
</evidence>
<evidence type="ECO:0000269" key="5">
    <source>
    </source>
</evidence>
<evidence type="ECO:0000269" key="6">
    <source>
    </source>
</evidence>
<evidence type="ECO:0000303" key="7">
    <source>
    </source>
</evidence>
<evidence type="ECO:0000305" key="8"/>
<reference key="1">
    <citation type="journal article" date="1994" name="Genomics">
        <title>Arrangement of a cluster of three mouse type I keratin genes expressed sequentially during esophageal-type epithelial cell differentiation.</title>
        <authorList>
            <person name="Filion M."/>
            <person name="Sarafian V."/>
            <person name="Lussier M."/>
            <person name="Belanger C."/>
            <person name="Lapointe L."/>
            <person name="Royal A."/>
        </authorList>
    </citation>
    <scope>NUCLEOTIDE SEQUENCE [GENOMIC DNA]</scope>
    <source>
        <strain>129/Sv</strain>
    </source>
</reference>
<reference key="2">
    <citation type="journal article" date="2005" name="Science">
        <title>The transcriptional landscape of the mammalian genome.</title>
        <authorList>
            <person name="Carninci P."/>
            <person name="Kasukawa T."/>
            <person name="Katayama S."/>
            <person name="Gough J."/>
            <person name="Frith M.C."/>
            <person name="Maeda N."/>
            <person name="Oyama R."/>
            <person name="Ravasi T."/>
            <person name="Lenhard B."/>
            <person name="Wells C."/>
            <person name="Kodzius R."/>
            <person name="Shimokawa K."/>
            <person name="Bajic V.B."/>
            <person name="Brenner S.E."/>
            <person name="Batalov S."/>
            <person name="Forrest A.R."/>
            <person name="Zavolan M."/>
            <person name="Davis M.J."/>
            <person name="Wilming L.G."/>
            <person name="Aidinis V."/>
            <person name="Allen J.E."/>
            <person name="Ambesi-Impiombato A."/>
            <person name="Apweiler R."/>
            <person name="Aturaliya R.N."/>
            <person name="Bailey T.L."/>
            <person name="Bansal M."/>
            <person name="Baxter L."/>
            <person name="Beisel K.W."/>
            <person name="Bersano T."/>
            <person name="Bono H."/>
            <person name="Chalk A.M."/>
            <person name="Chiu K.P."/>
            <person name="Choudhary V."/>
            <person name="Christoffels A."/>
            <person name="Clutterbuck D.R."/>
            <person name="Crowe M.L."/>
            <person name="Dalla E."/>
            <person name="Dalrymple B.P."/>
            <person name="de Bono B."/>
            <person name="Della Gatta G."/>
            <person name="di Bernardo D."/>
            <person name="Down T."/>
            <person name="Engstrom P."/>
            <person name="Fagiolini M."/>
            <person name="Faulkner G."/>
            <person name="Fletcher C.F."/>
            <person name="Fukushima T."/>
            <person name="Furuno M."/>
            <person name="Futaki S."/>
            <person name="Gariboldi M."/>
            <person name="Georgii-Hemming P."/>
            <person name="Gingeras T.R."/>
            <person name="Gojobori T."/>
            <person name="Green R.E."/>
            <person name="Gustincich S."/>
            <person name="Harbers M."/>
            <person name="Hayashi Y."/>
            <person name="Hensch T.K."/>
            <person name="Hirokawa N."/>
            <person name="Hill D."/>
            <person name="Huminiecki L."/>
            <person name="Iacono M."/>
            <person name="Ikeo K."/>
            <person name="Iwama A."/>
            <person name="Ishikawa T."/>
            <person name="Jakt M."/>
            <person name="Kanapin A."/>
            <person name="Katoh M."/>
            <person name="Kawasawa Y."/>
            <person name="Kelso J."/>
            <person name="Kitamura H."/>
            <person name="Kitano H."/>
            <person name="Kollias G."/>
            <person name="Krishnan S.P."/>
            <person name="Kruger A."/>
            <person name="Kummerfeld S.K."/>
            <person name="Kurochkin I.V."/>
            <person name="Lareau L.F."/>
            <person name="Lazarevic D."/>
            <person name="Lipovich L."/>
            <person name="Liu J."/>
            <person name="Liuni S."/>
            <person name="McWilliam S."/>
            <person name="Madan Babu M."/>
            <person name="Madera M."/>
            <person name="Marchionni L."/>
            <person name="Matsuda H."/>
            <person name="Matsuzawa S."/>
            <person name="Miki H."/>
            <person name="Mignone F."/>
            <person name="Miyake S."/>
            <person name="Morris K."/>
            <person name="Mottagui-Tabar S."/>
            <person name="Mulder N."/>
            <person name="Nakano N."/>
            <person name="Nakauchi H."/>
            <person name="Ng P."/>
            <person name="Nilsson R."/>
            <person name="Nishiguchi S."/>
            <person name="Nishikawa S."/>
            <person name="Nori F."/>
            <person name="Ohara O."/>
            <person name="Okazaki Y."/>
            <person name="Orlando V."/>
            <person name="Pang K.C."/>
            <person name="Pavan W.J."/>
            <person name="Pavesi G."/>
            <person name="Pesole G."/>
            <person name="Petrovsky N."/>
            <person name="Piazza S."/>
            <person name="Reed J."/>
            <person name="Reid J.F."/>
            <person name="Ring B.Z."/>
            <person name="Ringwald M."/>
            <person name="Rost B."/>
            <person name="Ruan Y."/>
            <person name="Salzberg S.L."/>
            <person name="Sandelin A."/>
            <person name="Schneider C."/>
            <person name="Schoenbach C."/>
            <person name="Sekiguchi K."/>
            <person name="Semple C.A."/>
            <person name="Seno S."/>
            <person name="Sessa L."/>
            <person name="Sheng Y."/>
            <person name="Shibata Y."/>
            <person name="Shimada H."/>
            <person name="Shimada K."/>
            <person name="Silva D."/>
            <person name="Sinclair B."/>
            <person name="Sperling S."/>
            <person name="Stupka E."/>
            <person name="Sugiura K."/>
            <person name="Sultana R."/>
            <person name="Takenaka Y."/>
            <person name="Taki K."/>
            <person name="Tammoja K."/>
            <person name="Tan S.L."/>
            <person name="Tang S."/>
            <person name="Taylor M.S."/>
            <person name="Tegner J."/>
            <person name="Teichmann S.A."/>
            <person name="Ueda H.R."/>
            <person name="van Nimwegen E."/>
            <person name="Verardo R."/>
            <person name="Wei C.L."/>
            <person name="Yagi K."/>
            <person name="Yamanishi H."/>
            <person name="Zabarovsky E."/>
            <person name="Zhu S."/>
            <person name="Zimmer A."/>
            <person name="Hide W."/>
            <person name="Bult C."/>
            <person name="Grimmond S.M."/>
            <person name="Teasdale R.D."/>
            <person name="Liu E.T."/>
            <person name="Brusic V."/>
            <person name="Quackenbush J."/>
            <person name="Wahlestedt C."/>
            <person name="Mattick J.S."/>
            <person name="Hume D.A."/>
            <person name="Kai C."/>
            <person name="Sasaki D."/>
            <person name="Tomaru Y."/>
            <person name="Fukuda S."/>
            <person name="Kanamori-Katayama M."/>
            <person name="Suzuki M."/>
            <person name="Aoki J."/>
            <person name="Arakawa T."/>
            <person name="Iida J."/>
            <person name="Imamura K."/>
            <person name="Itoh M."/>
            <person name="Kato T."/>
            <person name="Kawaji H."/>
            <person name="Kawagashira N."/>
            <person name="Kawashima T."/>
            <person name="Kojima M."/>
            <person name="Kondo S."/>
            <person name="Konno H."/>
            <person name="Nakano K."/>
            <person name="Ninomiya N."/>
            <person name="Nishio T."/>
            <person name="Okada M."/>
            <person name="Plessy C."/>
            <person name="Shibata K."/>
            <person name="Shiraki T."/>
            <person name="Suzuki S."/>
            <person name="Tagami M."/>
            <person name="Waki K."/>
            <person name="Watahiki A."/>
            <person name="Okamura-Oho Y."/>
            <person name="Suzuki H."/>
            <person name="Kawai J."/>
            <person name="Hayashizaki Y."/>
        </authorList>
    </citation>
    <scope>NUCLEOTIDE SEQUENCE [LARGE SCALE MRNA] (ISOFORM 1)</scope>
    <source>
        <strain>C57BL/6J</strain>
        <tissue>Head</tissue>
    </source>
</reference>
<reference key="3">
    <citation type="journal article" date="2004" name="Genome Res.">
        <title>The status, quality, and expansion of the NIH full-length cDNA project: the Mammalian Gene Collection (MGC).</title>
        <authorList>
            <consortium name="The MGC Project Team"/>
        </authorList>
    </citation>
    <scope>NUCLEOTIDE SEQUENCE [LARGE SCALE MRNA] (ISOFORM 2)</scope>
</reference>
<reference key="4">
    <citation type="journal article" date="1990" name="Differentiation">
        <title>Tissue-specific expression of murine keratin K13 in internal stratified squamous epithelia and its aberrant expression during two-stage mouse skin carcinogenesis is associated with the methylation state of a distinct CpG site in the remote 5'-flanking region of the gene.</title>
        <authorList>
            <person name="Winter H."/>
            <person name="Rentrop M."/>
            <person name="Nischt R."/>
            <person name="Schweizer J."/>
        </authorList>
    </citation>
    <scope>NUCLEOTIDE SEQUENCE [GENOMIC DNA] OF 1-157</scope>
    <scope>TISSUE SPECIFICITY</scope>
    <source>
        <tissue>Liver</tissue>
    </source>
</reference>
<reference key="5">
    <citation type="submission" date="2009-01" db="UniProtKB">
        <authorList>
            <person name="Lubec G."/>
            <person name="Sunyer B."/>
            <person name="Chen W.-Q."/>
        </authorList>
    </citation>
    <scope>PROTEIN SEQUENCE OF 107-113; 177-183; 194-204 AND 390-398</scope>
    <scope>IDENTIFICATION BY MASS SPECTROMETRY</scope>
    <source>
        <strain>OF1</strain>
        <tissue>Hippocampus</tissue>
    </source>
</reference>
<reference key="6">
    <citation type="journal article" date="1986" name="Nucleic Acids Res.">
        <title>Nonepidermal members of the keratin multigene family: cDNA sequences and in situ localization of the mRNAs.</title>
        <authorList>
            <person name="Knapp B."/>
            <person name="Rentrop M."/>
            <person name="Schweizer J."/>
            <person name="Winter H."/>
        </authorList>
    </citation>
    <scope>NUCLEOTIDE SEQUENCE [MRNA] OF 126-437 (ISOFORM 1)</scope>
</reference>
<reference key="7">
    <citation type="journal article" date="2010" name="Cell">
        <title>A tissue-specific atlas of mouse protein phosphorylation and expression.</title>
        <authorList>
            <person name="Huttlin E.L."/>
            <person name="Jedrychowski M.P."/>
            <person name="Elias J.E."/>
            <person name="Goswami T."/>
            <person name="Rad R."/>
            <person name="Beausoleil S.A."/>
            <person name="Villen J."/>
            <person name="Haas W."/>
            <person name="Sowa M.E."/>
            <person name="Gygi S.P."/>
        </authorList>
    </citation>
    <scope>IDENTIFICATION BY MASS SPECTROMETRY [LARGE SCALE ANALYSIS]</scope>
    <source>
        <tissue>Heart</tissue>
        <tissue>Liver</tissue>
    </source>
</reference>
<reference key="8">
    <citation type="journal article" date="2016" name="Hum. Mol. Genet.">
        <title>Keratin 12 missense mutation induces the unfolded protein response and apoptosis in Meesmann epithelial corneal dystrophy.</title>
        <authorList>
            <person name="Allen E.H."/>
            <person name="Courtney D.G."/>
            <person name="Atkinson S.D."/>
            <person name="Moore J.E."/>
            <person name="Mairs L."/>
            <person name="Poulsen E.T."/>
            <person name="Schiroli D."/>
            <person name="Maurizi E."/>
            <person name="Cole C."/>
            <person name="Hickerson R.P."/>
            <person name="James J."/>
            <person name="Murgatroyd H."/>
            <person name="Smith F.J."/>
            <person name="MacEwen C."/>
            <person name="Enghild J.J."/>
            <person name="Nesbit M.A."/>
            <person name="Leslie Pedrioli D.M."/>
            <person name="McLean W.H."/>
            <person name="Moore C.B."/>
        </authorList>
    </citation>
    <scope>TISSUE SPECIFICITY</scope>
</reference>
<reference key="9">
    <citation type="journal article" date="2020" name="Dev. Biol.">
        <title>Keratin 13 deficiency causes white sponge nevus in mice.</title>
        <authorList>
            <person name="Simonson L."/>
            <person name="Vold S."/>
            <person name="Mowers C."/>
            <person name="Massey R.J."/>
            <person name="Ong I.M."/>
            <person name="Longley B.J."/>
            <person name="Chang H."/>
        </authorList>
    </citation>
    <scope>FUNCTION</scope>
    <scope>DEVELOPMENTAL STAGE</scope>
    <scope>DISRUPTION PHENOTYPE</scope>
</reference>
<gene>
    <name type="primary">Krt13</name>
    <name type="synonym">Krt1-13</name>
</gene>
<sequence>MSCRFQSSSMSYGGGFGAGSCQLGGGRNISSCSSRFVTGGSAGGYGGGMSCGFGGGAGGGFGGGFGGGFGGSYGGGFGGGFGDFGGVDGGLLSGNEKITMQNLNDRLASYLDKVRALEAANADLEVKIRDWHLKQSPASPERDYSAYYKTIEELRIKILEATTDNNRIILEIDNARLAADDFRLKYENELTLRQSVEADINGLRRVLDELTLAKTDLEMQIESLNEELAYLKKNHEEEMKEFSNQVVGQVNVEMDATPGIDLTRVLAEMREQYEALAEKNRRDAEEWFQTKSAELNKEVSSNAEMIQTSKTEITELRRTLQGLEIELQSQLSMKAGLESTLAETECRYALQLQQIQGLISSIEAQLSELRSEMECQNQEYKMLLDIKTRLEQEIATYRSLLEGQDAKMTGFNSGGNNTTTSNGSPSSNSGRPDFRKY</sequence>
<accession>P08730</accession>
<accession>Q3V176</accession>
<accession>Q6PAI1</accession>
<keyword id="KW-0025">Alternative splicing</keyword>
<keyword id="KW-0175">Coiled coil</keyword>
<keyword id="KW-0903">Direct protein sequencing</keyword>
<keyword id="KW-0325">Glycoprotein</keyword>
<keyword id="KW-0403">Intermediate filament</keyword>
<keyword id="KW-0416">Keratin</keyword>
<keyword id="KW-0488">Methylation</keyword>
<keyword id="KW-1185">Reference proteome</keyword>
<name>K1C13_MOUSE</name>
<organism>
    <name type="scientific">Mus musculus</name>
    <name type="common">Mouse</name>
    <dbReference type="NCBI Taxonomy" id="10090"/>
    <lineage>
        <taxon>Eukaryota</taxon>
        <taxon>Metazoa</taxon>
        <taxon>Chordata</taxon>
        <taxon>Craniata</taxon>
        <taxon>Vertebrata</taxon>
        <taxon>Euteleostomi</taxon>
        <taxon>Mammalia</taxon>
        <taxon>Eutheria</taxon>
        <taxon>Euarchontoglires</taxon>
        <taxon>Glires</taxon>
        <taxon>Rodentia</taxon>
        <taxon>Myomorpha</taxon>
        <taxon>Muroidea</taxon>
        <taxon>Muridae</taxon>
        <taxon>Murinae</taxon>
        <taxon>Mus</taxon>
        <taxon>Mus</taxon>
    </lineage>
</organism>